<accession>Q9JJZ8</accession>
<accession>Q8CFV6</accession>
<accession>Q9WV01</accession>
<reference key="1">
    <citation type="journal article" date="2000" name="J. Comp. Neurol.">
        <title>Cloning and immunocytochemical localization of a cyclic nucleotide-gated channel alpha-subunit to all cone photoreceptors in the mouse retina.</title>
        <authorList>
            <person name="Hirano A.A."/>
            <person name="Hack I."/>
            <person name="Waessle H."/>
            <person name="Duvoisin R.M."/>
        </authorList>
    </citation>
    <scope>NUCLEOTIDE SEQUENCE [MRNA]</scope>
    <source>
        <strain>C57BL/6J</strain>
        <tissue>Retina</tissue>
    </source>
</reference>
<reference key="2">
    <citation type="journal article" date="2004" name="Genome Res.">
        <title>The status, quality, and expansion of the NIH full-length cDNA project: the Mammalian Gene Collection (MGC).</title>
        <authorList>
            <consortium name="The MGC Project Team"/>
        </authorList>
    </citation>
    <scope>NUCLEOTIDE SEQUENCE [LARGE SCALE MRNA]</scope>
    <source>
        <tissue>Eye</tissue>
    </source>
</reference>
<reference key="3">
    <citation type="journal article" date="1999" name="Proc. Natl. Acad. Sci. U.S.A.">
        <title>Selective loss of cone function in mice lacking the cyclic nucleotide-gated channel CNG3.</title>
        <authorList>
            <person name="Biel M."/>
            <person name="Seeliger M."/>
            <person name="Pfeifer A."/>
            <person name="Kohler K."/>
            <person name="Gerstner A."/>
            <person name="Ludwig A."/>
            <person name="Jaissle G."/>
            <person name="Fauser S."/>
            <person name="Zrenner E."/>
            <person name="Hofmann F."/>
        </authorList>
    </citation>
    <scope>NUCLEOTIDE SEQUENCE [GENOMIC DNA] OF 95-631</scope>
    <scope>FUNCTION</scope>
    <scope>DISRUPTION PHENOTYPE</scope>
    <source>
        <strain>129/Sv</strain>
    </source>
</reference>
<reference key="4">
    <citation type="journal article" date="2000" name="J. Neurosci.">
        <title>Molecular cloning and functional characterization of a new modulatory cyclic nucleotide-gated channel subunit from mouse retina.</title>
        <authorList>
            <person name="Gerstner A."/>
            <person name="Zong X."/>
            <person name="Hofmann F."/>
            <person name="Biel M."/>
        </authorList>
    </citation>
    <scope>FUNCTION</scope>
    <scope>SUBUNIT</scope>
</reference>
<reference key="5">
    <citation type="journal article" date="2001" name="Science">
        <title>Nomenclature for ion channel subunits.</title>
        <authorList>
            <person name="Bradley J."/>
            <person name="Frings S."/>
            <person name="Yau K.W."/>
            <person name="Reed R."/>
        </authorList>
    </citation>
    <scope>NOMENCLATURE</scope>
</reference>
<feature type="chain" id="PRO_0000219318" description="Cyclic nucleotide-gated channel alpha-3">
    <location>
        <begin position="1"/>
        <end position="631"/>
    </location>
</feature>
<feature type="topological domain" description="Cytoplasmic" evidence="11">
    <location>
        <begin position="1"/>
        <end position="111"/>
    </location>
</feature>
<feature type="transmembrane region" description="Helical; Name=S1" evidence="2">
    <location>
        <begin position="112"/>
        <end position="133"/>
    </location>
</feature>
<feature type="topological domain" description="Extracellular" evidence="11">
    <location>
        <begin position="134"/>
        <end position="139"/>
    </location>
</feature>
<feature type="transmembrane region" description="Helical; Name=S2" evidence="2">
    <location>
        <begin position="140"/>
        <end position="160"/>
    </location>
</feature>
<feature type="topological domain" description="Cytoplasmic" evidence="11">
    <location>
        <begin position="161"/>
        <end position="187"/>
    </location>
</feature>
<feature type="transmembrane region" description="Helical; Name=S3" evidence="2">
    <location>
        <begin position="188"/>
        <end position="207"/>
    </location>
</feature>
<feature type="topological domain" description="Extracellular" evidence="11">
    <location>
        <begin position="208"/>
        <end position="211"/>
    </location>
</feature>
<feature type="transmembrane region" description="Helical; Name=S4" evidence="2">
    <location>
        <begin position="212"/>
        <end position="229"/>
    </location>
</feature>
<feature type="topological domain" description="Cytoplasmic" evidence="11">
    <location>
        <begin position="230"/>
        <end position="239"/>
    </location>
</feature>
<feature type="transmembrane region" description="Helical; Name=S5" evidence="2">
    <location>
        <begin position="240"/>
        <end position="262"/>
    </location>
</feature>
<feature type="topological domain" description="Extracellular" evidence="11">
    <location>
        <begin position="263"/>
        <end position="288"/>
    </location>
</feature>
<feature type="transmembrane region" description="Helical; Name=P-helix" evidence="2">
    <location>
        <begin position="289"/>
        <end position="319"/>
    </location>
</feature>
<feature type="transmembrane region" description="Helical; Name=S6" evidence="2">
    <location>
        <begin position="320"/>
        <end position="344"/>
    </location>
</feature>
<feature type="topological domain" description="Cytoplasmic" evidence="11">
    <location>
        <begin position="345"/>
        <end position="631"/>
    </location>
</feature>
<feature type="region of interest" description="Disordered" evidence="6">
    <location>
        <begin position="1"/>
        <end position="21"/>
    </location>
</feature>
<feature type="region of interest" description="Disordered" evidence="6">
    <location>
        <begin position="71"/>
        <end position="98"/>
    </location>
</feature>
<feature type="region of interest" description="Ion conduction pathway" evidence="2">
    <location>
        <begin position="239"/>
        <end position="347"/>
    </location>
</feature>
<feature type="region of interest" description="Selectivity filter" evidence="2">
    <location>
        <begin position="306"/>
        <end position="309"/>
    </location>
</feature>
<feature type="region of interest" description="C-linker" evidence="2">
    <location>
        <begin position="349"/>
        <end position="426"/>
    </location>
</feature>
<feature type="region of interest" description="Cyclic nucleotide-binding domain" evidence="2">
    <location>
        <begin position="429"/>
        <end position="549"/>
    </location>
</feature>
<feature type="coiled-coil region" evidence="1">
    <location>
        <begin position="567"/>
        <end position="610"/>
    </location>
</feature>
<feature type="compositionally biased region" description="Polar residues" evidence="6">
    <location>
        <begin position="1"/>
        <end position="18"/>
    </location>
</feature>
<feature type="compositionally biased region" description="Basic and acidic residues" evidence="6">
    <location>
        <begin position="87"/>
        <end position="98"/>
    </location>
</feature>
<feature type="binding site" evidence="2">
    <location>
        <position position="489"/>
    </location>
    <ligand>
        <name>3',5'-cyclic GMP</name>
        <dbReference type="ChEBI" id="CHEBI:57746"/>
    </ligand>
</feature>
<feature type="binding site" evidence="2">
    <location>
        <position position="490"/>
    </location>
    <ligand>
        <name>3',5'-cyclic GMP</name>
        <dbReference type="ChEBI" id="CHEBI:57746"/>
    </ligand>
</feature>
<feature type="binding site" evidence="2">
    <location>
        <position position="492"/>
    </location>
    <ligand>
        <name>3',5'-cyclic GMP</name>
        <dbReference type="ChEBI" id="CHEBI:57746"/>
    </ligand>
</feature>
<feature type="binding site" evidence="2">
    <location>
        <position position="505"/>
    </location>
    <ligand>
        <name>3',5'-cyclic GMP</name>
        <dbReference type="ChEBI" id="CHEBI:57746"/>
    </ligand>
</feature>
<feature type="binding site" evidence="2">
    <location>
        <position position="506"/>
    </location>
    <ligand>
        <name>3',5'-cyclic GMP</name>
        <dbReference type="ChEBI" id="CHEBI:57746"/>
    </ligand>
</feature>
<feature type="binding site" evidence="2">
    <location>
        <position position="550"/>
    </location>
    <ligand>
        <name>3',5'-cyclic GMP</name>
        <dbReference type="ChEBI" id="CHEBI:57746"/>
    </ligand>
</feature>
<feature type="site" description="Central gate" evidence="2">
    <location>
        <position position="333"/>
    </location>
</feature>
<feature type="site" description="Central gate" evidence="2">
    <location>
        <position position="337"/>
    </location>
</feature>
<feature type="glycosylation site" description="N-linked (GalNAc...) asparagine" evidence="2">
    <location>
        <position position="280"/>
    </location>
</feature>
<feature type="sequence conflict" description="In Ref. 1; CAB89685." evidence="11" ref="1">
    <original>Y</original>
    <variation>C</variation>
    <location>
        <position position="110"/>
    </location>
</feature>
<feature type="sequence conflict" description="In Ref. 3; CAB42891." evidence="11" ref="3">
    <original>L</original>
    <variation>V</variation>
    <location>
        <position position="157"/>
    </location>
</feature>
<protein>
    <recommendedName>
        <fullName>Cyclic nucleotide-gated channel alpha-3</fullName>
        <shortName>CNG channel alpha-3</shortName>
        <shortName>CNG-3</shortName>
        <shortName evidence="9">CNG3</shortName>
    </recommendedName>
    <alternativeName>
        <fullName evidence="2">Cone photoreceptor cGMP-gated channel subunit alpha-3</fullName>
    </alternativeName>
    <alternativeName>
        <fullName evidence="4">Gustatory cyclic nucleotide-gated cation channel</fullName>
        <shortName evidence="4">CNGgust</shortName>
    </alternativeName>
</protein>
<name>CNGA3_MOUSE</name>
<comment type="function">
    <text evidence="2 3 4 7 8">Pore-forming subunit of the cone cyclic nucleotide-gated channel. Mediates cone photoresponses at bright light converting transient changes in intracellular cGMP levels into electrical signals. In the dark, cGMP levels are high and keep the channel open enabling a steady inward current carried by Na(+) and Ca(2+) ions that leads to membrane depolarization and neurotransmitter release from synaptic terminals. Upon photon absorption cGMP levels decline leading to channel closure and membrane hyperpolarization that ultimately slows neurotransmitter release and signals the presence of light, the end point of the phototransduction cascade (By similarity) (PubMed:10377453, PubMed:10662822). Pore-forming subunit of the gustatory cyclic nucleotide-gated channel. In the taste buds, may sense oral extracellular pH and conduct ion currents that modulate the excitability of taste cells (By similarity). Conducts cGMP- and cAMP-gated ion currents, with permeability for monovalent and divalent cations (By similarity).</text>
</comment>
<comment type="catalytic activity">
    <reaction evidence="3">
        <text>Ca(2+)(in) = Ca(2+)(out)</text>
        <dbReference type="Rhea" id="RHEA:29671"/>
        <dbReference type="ChEBI" id="CHEBI:29108"/>
    </reaction>
</comment>
<comment type="catalytic activity">
    <reaction evidence="3">
        <text>Na(+)(in) = Na(+)(out)</text>
        <dbReference type="Rhea" id="RHEA:34963"/>
        <dbReference type="ChEBI" id="CHEBI:29101"/>
    </reaction>
</comment>
<comment type="catalytic activity">
    <reaction evidence="3">
        <text>K(+)(in) = K(+)(out)</text>
        <dbReference type="Rhea" id="RHEA:29463"/>
        <dbReference type="ChEBI" id="CHEBI:29103"/>
    </reaction>
</comment>
<comment type="catalytic activity">
    <reaction evidence="3">
        <text>NH4(+)(in) = NH4(+)(out)</text>
        <dbReference type="Rhea" id="RHEA:28747"/>
        <dbReference type="ChEBI" id="CHEBI:28938"/>
    </reaction>
</comment>
<comment type="catalytic activity">
    <reaction evidence="3">
        <text>Rb(+)(in) = Rb(+)(out)</text>
        <dbReference type="Rhea" id="RHEA:78547"/>
        <dbReference type="ChEBI" id="CHEBI:49847"/>
    </reaction>
</comment>
<comment type="catalytic activity">
    <reaction evidence="3">
        <text>Li(+)(in) = Li(+)(out)</text>
        <dbReference type="Rhea" id="RHEA:78551"/>
        <dbReference type="ChEBI" id="CHEBI:49713"/>
    </reaction>
</comment>
<comment type="catalytic activity">
    <reaction evidence="3">
        <text>Cs(+)(in) = Cs(+)(out)</text>
        <dbReference type="Rhea" id="RHEA:78555"/>
        <dbReference type="ChEBI" id="CHEBI:49547"/>
    </reaction>
</comment>
<comment type="subunit">
    <text evidence="2 8">Forms heterotetrameric channels composed of CNGA3 and CNGB3 subunits with 3:1 stoichiometry.</text>
</comment>
<comment type="subcellular location">
    <subcellularLocation>
        <location evidence="2">Cell membrane</location>
        <topology evidence="5">Multi-pass membrane protein</topology>
    </subcellularLocation>
</comment>
<comment type="tissue specificity">
    <text>Prominently expressed in retina.</text>
</comment>
<comment type="domain">
    <text evidence="2">The C-terminal coiled-coil domain mediates homotrimerization of CNGA subunits.</text>
</comment>
<comment type="domain">
    <text evidence="2">The cyclic nucleotide-binding domain (CNBD) comprises three helices and a beta-roll of eight beta-strands from CNGA3 and CNGB3 subunits. Upon cNMP binding transmits the conformational changes to the C-linker domain of the S6 helix to open the ion conduction pathway.</text>
</comment>
<comment type="domain">
    <text evidence="2">The ion conduction pathway consists of S5, S6 and pore helices from CNGA3 and CNGB3 subunits. It contains a central hydrophobic gate that opens upon cNMP binding.</text>
</comment>
<comment type="disruption phenotype">
    <text evidence="7">Progressive degeneration of cone photoreceptors. No cone photoreceptors were detected in mice older than 8 months.</text>
</comment>
<comment type="similarity">
    <text evidence="11">Belongs to the cyclic nucleotide-gated cation channel (TC 1.A.1.5) family. CNGA3 subfamily.</text>
</comment>
<keyword id="KW-0106">Calcium</keyword>
<keyword id="KW-0107">Calcium channel</keyword>
<keyword id="KW-0109">Calcium transport</keyword>
<keyword id="KW-1003">Cell membrane</keyword>
<keyword id="KW-0140">cGMP</keyword>
<keyword id="KW-0142">cGMP-binding</keyword>
<keyword id="KW-0175">Coiled coil</keyword>
<keyword id="KW-0325">Glycoprotein</keyword>
<keyword id="KW-0407">Ion channel</keyword>
<keyword id="KW-0406">Ion transport</keyword>
<keyword id="KW-1071">Ligand-gated ion channel</keyword>
<keyword id="KW-0472">Membrane</keyword>
<keyword id="KW-0547">Nucleotide-binding</keyword>
<keyword id="KW-1185">Reference proteome</keyword>
<keyword id="KW-0716">Sensory transduction</keyword>
<keyword id="KW-0915">Sodium</keyword>
<keyword id="KW-0894">Sodium channel</keyword>
<keyword id="KW-0739">Sodium transport</keyword>
<keyword id="KW-0812">Transmembrane</keyword>
<keyword id="KW-1133">Transmembrane helix</keyword>
<keyword id="KW-0813">Transport</keyword>
<keyword id="KW-0844">Vision</keyword>
<sequence length="631" mass="72702">MAKVNTQCSQPSPTQLSIKNADRDLDHVENGLGRVSRLIISIRAWASRHLHDEDQTPDSFLDRFHGSELKEVSTRESNAQPNPGEQKPPDGGEGRKEEPIVVDPSSNIYYRWLTAIALPVFYNWCLLVCRACFDELQSEHLTLWLVLDYSADVLYVLDMLVRARTGFLEQGLMVRDTKRLWKHYTKTLHFKLDILSLIPTDLAYLKLGVNYPELRFNRLLKFSRLFEFFDRTETRTNYPNVFRIGNLVLYTLIIIHWNACIYFAISKFIGFGTDSWVYPNTSKPEYARLSRKYIYSLYWSTLTLTTIGETPPPVKDEEYLFVVIDFLVGILIFATIVGNVGSMISNMNAPRVEFQAKIDSVKQYMQFRKVTKDLETRVIRWFDYLWANRKTVDEKEVLKNLPDKLKAEIAINVHLDTLKKVRIFQDCEAGLLVELVLKLRPTVFSPGDYICKKGDIGREMYIIKEGKLAVVADDGVTQFVVLSDGSYFGEISILNIKGSKSGNRRTANIRSIGYSDLFCLSKDDLMEALTEYPDAKRALEEKGRQILMKDNLIDEDLVAARVDTRDVEEKVEYLESSLDILQTRFARLLAEYSASQMKLKQRLTRLESQMNRRCCGFSPDRENSEDASKTD</sequence>
<organism>
    <name type="scientific">Mus musculus</name>
    <name type="common">Mouse</name>
    <dbReference type="NCBI Taxonomy" id="10090"/>
    <lineage>
        <taxon>Eukaryota</taxon>
        <taxon>Metazoa</taxon>
        <taxon>Chordata</taxon>
        <taxon>Craniata</taxon>
        <taxon>Vertebrata</taxon>
        <taxon>Euteleostomi</taxon>
        <taxon>Mammalia</taxon>
        <taxon>Eutheria</taxon>
        <taxon>Euarchontoglires</taxon>
        <taxon>Glires</taxon>
        <taxon>Rodentia</taxon>
        <taxon>Myomorpha</taxon>
        <taxon>Muroidea</taxon>
        <taxon>Muridae</taxon>
        <taxon>Murinae</taxon>
        <taxon>Mus</taxon>
        <taxon>Mus</taxon>
    </lineage>
</organism>
<dbReference type="EMBL" id="AJ243933">
    <property type="protein sequence ID" value="CAB89685.1"/>
    <property type="molecule type" value="mRNA"/>
</dbReference>
<dbReference type="EMBL" id="BC035272">
    <property type="protein sequence ID" value="AAH35272.1"/>
    <property type="molecule type" value="mRNA"/>
</dbReference>
<dbReference type="EMBL" id="BC049145">
    <property type="protein sequence ID" value="AAH49145.1"/>
    <property type="molecule type" value="mRNA"/>
</dbReference>
<dbReference type="EMBL" id="AJ238239">
    <property type="protein sequence ID" value="CAB42891.1"/>
    <property type="molecule type" value="Genomic_DNA"/>
</dbReference>
<dbReference type="EMBL" id="AJ238240">
    <property type="protein sequence ID" value="CAB42891.1"/>
    <property type="status" value="JOINED"/>
    <property type="molecule type" value="Genomic_DNA"/>
</dbReference>
<dbReference type="EMBL" id="AJ238241">
    <property type="protein sequence ID" value="CAB42891.1"/>
    <property type="status" value="JOINED"/>
    <property type="molecule type" value="Genomic_DNA"/>
</dbReference>
<dbReference type="CCDS" id="CCDS14890.1"/>
<dbReference type="RefSeq" id="NP_001268939.1">
    <property type="nucleotide sequence ID" value="NM_001282010.1"/>
</dbReference>
<dbReference type="RefSeq" id="NP_034048.1">
    <property type="nucleotide sequence ID" value="NM_009918.3"/>
</dbReference>
<dbReference type="RefSeq" id="XP_017169234.1">
    <property type="nucleotide sequence ID" value="XM_017313745.3"/>
</dbReference>
<dbReference type="RefSeq" id="XP_036013008.1">
    <property type="nucleotide sequence ID" value="XM_036157115.1"/>
</dbReference>
<dbReference type="SMR" id="Q9JJZ8"/>
<dbReference type="BioGRID" id="198785">
    <property type="interactions" value="19"/>
</dbReference>
<dbReference type="FunCoup" id="Q9JJZ8">
    <property type="interactions" value="1354"/>
</dbReference>
<dbReference type="STRING" id="10090.ENSMUSP00000142175"/>
<dbReference type="GlyGen" id="Q9JJZ8">
    <property type="glycosylation" value="1 site"/>
</dbReference>
<dbReference type="iPTMnet" id="Q9JJZ8"/>
<dbReference type="PhosphoSitePlus" id="Q9JJZ8"/>
<dbReference type="PaxDb" id="10090-ENSMUSP00000027288"/>
<dbReference type="ABCD" id="Q9JJZ8">
    <property type="antibodies" value="1 sequenced antibody"/>
</dbReference>
<dbReference type="Antibodypedia" id="47515">
    <property type="antibodies" value="121 antibodies from 22 providers"/>
</dbReference>
<dbReference type="DNASU" id="12790"/>
<dbReference type="Ensembl" id="ENSMUST00000027288.10">
    <property type="protein sequence ID" value="ENSMUSP00000027288.8"/>
    <property type="gene ID" value="ENSMUSG00000026114.15"/>
</dbReference>
<dbReference type="Ensembl" id="ENSMUST00000194195.6">
    <property type="protein sequence ID" value="ENSMUSP00000142075.2"/>
    <property type="gene ID" value="ENSMUSG00000026114.15"/>
</dbReference>
<dbReference type="GeneID" id="12790"/>
<dbReference type="KEGG" id="mmu:12790"/>
<dbReference type="UCSC" id="uc007ari.2">
    <property type="organism name" value="mouse"/>
</dbReference>
<dbReference type="AGR" id="MGI:1341818"/>
<dbReference type="CTD" id="1261"/>
<dbReference type="MGI" id="MGI:1341818">
    <property type="gene designation" value="Cnga3"/>
</dbReference>
<dbReference type="VEuPathDB" id="HostDB:ENSMUSG00000026114"/>
<dbReference type="eggNOG" id="KOG0500">
    <property type="taxonomic scope" value="Eukaryota"/>
</dbReference>
<dbReference type="GeneTree" id="ENSGT00940000158737"/>
<dbReference type="HOGENOM" id="CLU_005746_12_0_1"/>
<dbReference type="InParanoid" id="Q9JJZ8"/>
<dbReference type="OMA" id="ELQMDHI"/>
<dbReference type="OrthoDB" id="421226at2759"/>
<dbReference type="PhylomeDB" id="Q9JJZ8"/>
<dbReference type="TreeFam" id="TF319048"/>
<dbReference type="BioGRID-ORCS" id="12790">
    <property type="hits" value="2 hits in 78 CRISPR screens"/>
</dbReference>
<dbReference type="PRO" id="PR:Q9JJZ8"/>
<dbReference type="Proteomes" id="UP000000589">
    <property type="component" value="Chromosome 1"/>
</dbReference>
<dbReference type="RNAct" id="Q9JJZ8">
    <property type="molecule type" value="protein"/>
</dbReference>
<dbReference type="Bgee" id="ENSMUSG00000026114">
    <property type="expression patterns" value="Expressed in retinal neural layer and 37 other cell types or tissues"/>
</dbReference>
<dbReference type="ExpressionAtlas" id="Q9JJZ8">
    <property type="expression patterns" value="baseline and differential"/>
</dbReference>
<dbReference type="GO" id="GO:0120199">
    <property type="term" value="C:cone photoreceptor outer segment"/>
    <property type="evidence" value="ECO:0000314"/>
    <property type="project" value="MGI"/>
</dbReference>
<dbReference type="GO" id="GO:0001750">
    <property type="term" value="C:photoreceptor outer segment"/>
    <property type="evidence" value="ECO:0000314"/>
    <property type="project" value="MGI"/>
</dbReference>
<dbReference type="GO" id="GO:0005886">
    <property type="term" value="C:plasma membrane"/>
    <property type="evidence" value="ECO:0000314"/>
    <property type="project" value="MGI"/>
</dbReference>
<dbReference type="GO" id="GO:0005262">
    <property type="term" value="F:calcium channel activity"/>
    <property type="evidence" value="ECO:0007669"/>
    <property type="project" value="UniProtKB-KW"/>
</dbReference>
<dbReference type="GO" id="GO:0030553">
    <property type="term" value="F:cGMP binding"/>
    <property type="evidence" value="ECO:0007669"/>
    <property type="project" value="UniProtKB-KW"/>
</dbReference>
<dbReference type="GO" id="GO:0005221">
    <property type="term" value="F:intracellularly cyclic nucleotide-activated monoatomic cation channel activity"/>
    <property type="evidence" value="ECO:0000353"/>
    <property type="project" value="MGI"/>
</dbReference>
<dbReference type="GO" id="GO:0005272">
    <property type="term" value="F:sodium channel activity"/>
    <property type="evidence" value="ECO:0007669"/>
    <property type="project" value="UniProtKB-KW"/>
</dbReference>
<dbReference type="GO" id="GO:0060041">
    <property type="term" value="P:retina development in camera-type eye"/>
    <property type="evidence" value="ECO:0000316"/>
    <property type="project" value="MGI"/>
</dbReference>
<dbReference type="GO" id="GO:0046549">
    <property type="term" value="P:retinal cone cell development"/>
    <property type="evidence" value="ECO:0000315"/>
    <property type="project" value="MGI"/>
</dbReference>
<dbReference type="GO" id="GO:0007601">
    <property type="term" value="P:visual perception"/>
    <property type="evidence" value="ECO:0007669"/>
    <property type="project" value="UniProtKB-KW"/>
</dbReference>
<dbReference type="CDD" id="cd00038">
    <property type="entry name" value="CAP_ED"/>
    <property type="match status" value="1"/>
</dbReference>
<dbReference type="FunFam" id="2.60.120.10:FF:000002">
    <property type="entry name" value="Cyclic nucleotide gated channel alpha 1a"/>
    <property type="match status" value="1"/>
</dbReference>
<dbReference type="FunFam" id="1.10.287.630:FF:000001">
    <property type="entry name" value="Cyclic nucleotide-gated channel alpha 3"/>
    <property type="match status" value="1"/>
</dbReference>
<dbReference type="FunFam" id="1.10.287.70:FF:000030">
    <property type="entry name" value="Cyclic nucleotide-gated channel alpha 3"/>
    <property type="match status" value="1"/>
</dbReference>
<dbReference type="FunFam" id="1.20.5.300:FF:000002">
    <property type="entry name" value="Cyclic nucleotide-gated channel alpha 3"/>
    <property type="match status" value="1"/>
</dbReference>
<dbReference type="Gene3D" id="1.10.287.70">
    <property type="match status" value="1"/>
</dbReference>
<dbReference type="Gene3D" id="1.20.5.300">
    <property type="match status" value="1"/>
</dbReference>
<dbReference type="Gene3D" id="1.10.287.630">
    <property type="entry name" value="Helix hairpin bin"/>
    <property type="match status" value="1"/>
</dbReference>
<dbReference type="Gene3D" id="2.60.120.10">
    <property type="entry name" value="Jelly Rolls"/>
    <property type="match status" value="1"/>
</dbReference>
<dbReference type="InterPro" id="IPR032406">
    <property type="entry name" value="CLZ_dom"/>
</dbReference>
<dbReference type="InterPro" id="IPR050866">
    <property type="entry name" value="CNG_cation_channel"/>
</dbReference>
<dbReference type="InterPro" id="IPR018488">
    <property type="entry name" value="cNMP-bd_CS"/>
</dbReference>
<dbReference type="InterPro" id="IPR000595">
    <property type="entry name" value="cNMP-bd_dom"/>
</dbReference>
<dbReference type="InterPro" id="IPR018490">
    <property type="entry name" value="cNMP-bd_dom_sf"/>
</dbReference>
<dbReference type="InterPro" id="IPR005821">
    <property type="entry name" value="Ion_trans_dom"/>
</dbReference>
<dbReference type="InterPro" id="IPR014710">
    <property type="entry name" value="RmlC-like_jellyroll"/>
</dbReference>
<dbReference type="PANTHER" id="PTHR45638:SF6">
    <property type="entry name" value="CYCLIC NUCLEOTIDE-GATED CATION CHANNEL ALPHA-3"/>
    <property type="match status" value="1"/>
</dbReference>
<dbReference type="PANTHER" id="PTHR45638">
    <property type="entry name" value="CYCLIC NUCLEOTIDE-GATED CATION CHANNEL SUBUNIT A"/>
    <property type="match status" value="1"/>
</dbReference>
<dbReference type="Pfam" id="PF16526">
    <property type="entry name" value="CLZ"/>
    <property type="match status" value="1"/>
</dbReference>
<dbReference type="Pfam" id="PF00027">
    <property type="entry name" value="cNMP_binding"/>
    <property type="match status" value="1"/>
</dbReference>
<dbReference type="Pfam" id="PF00520">
    <property type="entry name" value="Ion_trans"/>
    <property type="match status" value="1"/>
</dbReference>
<dbReference type="SMART" id="SM00100">
    <property type="entry name" value="cNMP"/>
    <property type="match status" value="1"/>
</dbReference>
<dbReference type="SUPFAM" id="SSF51206">
    <property type="entry name" value="cAMP-binding domain-like"/>
    <property type="match status" value="1"/>
</dbReference>
<dbReference type="SUPFAM" id="SSF81324">
    <property type="entry name" value="Voltage-gated potassium channels"/>
    <property type="match status" value="1"/>
</dbReference>
<dbReference type="PROSITE" id="PS00888">
    <property type="entry name" value="CNMP_BINDING_1"/>
    <property type="match status" value="1"/>
</dbReference>
<dbReference type="PROSITE" id="PS00889">
    <property type="entry name" value="CNMP_BINDING_2"/>
    <property type="match status" value="1"/>
</dbReference>
<dbReference type="PROSITE" id="PS50042">
    <property type="entry name" value="CNMP_BINDING_3"/>
    <property type="match status" value="1"/>
</dbReference>
<proteinExistence type="evidence at protein level"/>
<gene>
    <name evidence="10 12" type="primary">Cnga3</name>
    <name type="synonym">Cng3</name>
</gene>
<evidence type="ECO:0000250" key="1">
    <source>
        <dbReference type="UniProtKB" id="P29973"/>
    </source>
</evidence>
<evidence type="ECO:0000250" key="2">
    <source>
        <dbReference type="UniProtKB" id="Q16281"/>
    </source>
</evidence>
<evidence type="ECO:0000250" key="3">
    <source>
        <dbReference type="UniProtKB" id="Q29441"/>
    </source>
</evidence>
<evidence type="ECO:0000250" key="4">
    <source>
        <dbReference type="UniProtKB" id="Q9ER33"/>
    </source>
</evidence>
<evidence type="ECO:0000255" key="5"/>
<evidence type="ECO:0000256" key="6">
    <source>
        <dbReference type="SAM" id="MobiDB-lite"/>
    </source>
</evidence>
<evidence type="ECO:0000269" key="7">
    <source>
    </source>
</evidence>
<evidence type="ECO:0000269" key="8">
    <source>
    </source>
</evidence>
<evidence type="ECO:0000303" key="9">
    <source>
    </source>
</evidence>
<evidence type="ECO:0000303" key="10">
    <source>
    </source>
</evidence>
<evidence type="ECO:0000305" key="11"/>
<evidence type="ECO:0000312" key="12">
    <source>
        <dbReference type="MGI" id="MGI:1341818"/>
    </source>
</evidence>